<accession>Q8NUK8</accession>
<feature type="chain" id="PRO_0000113020" description="Ornithine carbamoyltransferase, catabolic">
    <location>
        <begin position="1"/>
        <end position="336"/>
    </location>
</feature>
<feature type="binding site" evidence="2">
    <location>
        <begin position="62"/>
        <end position="65"/>
    </location>
    <ligand>
        <name>carbamoyl phosphate</name>
        <dbReference type="ChEBI" id="CHEBI:58228"/>
    </ligand>
</feature>
<feature type="binding site" evidence="2">
    <location>
        <position position="89"/>
    </location>
    <ligand>
        <name>carbamoyl phosphate</name>
        <dbReference type="ChEBI" id="CHEBI:58228"/>
    </ligand>
</feature>
<feature type="binding site" evidence="2">
    <location>
        <position position="113"/>
    </location>
    <ligand>
        <name>carbamoyl phosphate</name>
        <dbReference type="ChEBI" id="CHEBI:58228"/>
    </ligand>
</feature>
<feature type="binding site" evidence="2">
    <location>
        <begin position="140"/>
        <end position="143"/>
    </location>
    <ligand>
        <name>carbamoyl phosphate</name>
        <dbReference type="ChEBI" id="CHEBI:58228"/>
    </ligand>
</feature>
<feature type="binding site" evidence="2">
    <location>
        <position position="172"/>
    </location>
    <ligand>
        <name>L-ornithine</name>
        <dbReference type="ChEBI" id="CHEBI:46911"/>
    </ligand>
</feature>
<feature type="binding site" evidence="2">
    <location>
        <position position="236"/>
    </location>
    <ligand>
        <name>L-ornithine</name>
        <dbReference type="ChEBI" id="CHEBI:46911"/>
    </ligand>
</feature>
<feature type="binding site" evidence="2">
    <location>
        <begin position="240"/>
        <end position="241"/>
    </location>
    <ligand>
        <name>L-ornithine</name>
        <dbReference type="ChEBI" id="CHEBI:46911"/>
    </ligand>
</feature>
<feature type="binding site" evidence="2">
    <location>
        <begin position="277"/>
        <end position="278"/>
    </location>
    <ligand>
        <name>carbamoyl phosphate</name>
        <dbReference type="ChEBI" id="CHEBI:58228"/>
    </ligand>
</feature>
<feature type="binding site" evidence="2">
    <location>
        <position position="322"/>
    </location>
    <ligand>
        <name>carbamoyl phosphate</name>
        <dbReference type="ChEBI" id="CHEBI:58228"/>
    </ligand>
</feature>
<sequence>MTEIQKPYDLKGRSLLKESDFTKAEFEGLIDFAITLKEYKKNGIKHHYLSGKNIALLFEKNSTRTRAAFTVASIDLGAHPEFLGKNDIQLGKKESVEDTAKVLGRMFDGIEFRGFSQQAVEDLAKFSGVPVWNGLTDDWHPTQMLADFMTIKENFGYLEGINLTYVGDGRNNIAHSLMVAGAMLGVNVRICTPKSLNPKEAYVDIAKEKASQYGGSVMITDNIAEAVENTDAIYTDVWVSMGEESEFEQRINLLKDYQVNQQMFDLTGKDSTIFLHCLPAFHDTNTLYGQEIYEKYGLAEMEVTDQIFRSEHSKVFDQAENRMHTIKAVMAATLGS</sequence>
<keyword id="KW-0056">Arginine metabolism</keyword>
<keyword id="KW-0963">Cytoplasm</keyword>
<keyword id="KW-0808">Transferase</keyword>
<reference key="1">
    <citation type="journal article" date="2002" name="Lancet">
        <title>Genome and virulence determinants of high virulence community-acquired MRSA.</title>
        <authorList>
            <person name="Baba T."/>
            <person name="Takeuchi F."/>
            <person name="Kuroda M."/>
            <person name="Yuzawa H."/>
            <person name="Aoki K."/>
            <person name="Oguchi A."/>
            <person name="Nagai Y."/>
            <person name="Iwama N."/>
            <person name="Asano K."/>
            <person name="Naimi T."/>
            <person name="Kuroda H."/>
            <person name="Cui L."/>
            <person name="Yamamoto K."/>
            <person name="Hiramatsu K."/>
        </authorList>
    </citation>
    <scope>NUCLEOTIDE SEQUENCE [LARGE SCALE GENOMIC DNA]</scope>
    <source>
        <strain>MW2</strain>
    </source>
</reference>
<evidence type="ECO:0000250" key="1"/>
<evidence type="ECO:0000255" key="2">
    <source>
        <dbReference type="HAMAP-Rule" id="MF_01109"/>
    </source>
</evidence>
<evidence type="ECO:0000305" key="3"/>
<protein>
    <recommendedName>
        <fullName>Ornithine carbamoyltransferase, catabolic</fullName>
        <shortName>OTCase</shortName>
        <ecNumber>2.1.3.3</ecNumber>
    </recommendedName>
</protein>
<dbReference type="EC" id="2.1.3.3"/>
<dbReference type="EMBL" id="BA000033">
    <property type="protein sequence ID" value="BAB96420.1"/>
    <property type="molecule type" value="Genomic_DNA"/>
</dbReference>
<dbReference type="SMR" id="Q8NUK8"/>
<dbReference type="KEGG" id="sam:MW2555"/>
<dbReference type="HOGENOM" id="CLU_043846_3_1_9"/>
<dbReference type="UniPathway" id="UPA00254">
    <property type="reaction ID" value="UER00365"/>
</dbReference>
<dbReference type="GO" id="GO:0005737">
    <property type="term" value="C:cytoplasm"/>
    <property type="evidence" value="ECO:0007669"/>
    <property type="project" value="UniProtKB-SubCell"/>
</dbReference>
<dbReference type="GO" id="GO:0016597">
    <property type="term" value="F:amino acid binding"/>
    <property type="evidence" value="ECO:0007669"/>
    <property type="project" value="InterPro"/>
</dbReference>
<dbReference type="GO" id="GO:0004585">
    <property type="term" value="F:ornithine carbamoyltransferase activity"/>
    <property type="evidence" value="ECO:0007669"/>
    <property type="project" value="UniProtKB-UniRule"/>
</dbReference>
<dbReference type="GO" id="GO:0042450">
    <property type="term" value="P:arginine biosynthetic process via ornithine"/>
    <property type="evidence" value="ECO:0007669"/>
    <property type="project" value="TreeGrafter"/>
</dbReference>
<dbReference type="GO" id="GO:0019547">
    <property type="term" value="P:arginine catabolic process to ornithine"/>
    <property type="evidence" value="ECO:0007669"/>
    <property type="project" value="UniProtKB-UniPathway"/>
</dbReference>
<dbReference type="GO" id="GO:0019240">
    <property type="term" value="P:citrulline biosynthetic process"/>
    <property type="evidence" value="ECO:0007669"/>
    <property type="project" value="TreeGrafter"/>
</dbReference>
<dbReference type="GO" id="GO:0006526">
    <property type="term" value="P:L-arginine biosynthetic process"/>
    <property type="evidence" value="ECO:0007669"/>
    <property type="project" value="UniProtKB-UniRule"/>
</dbReference>
<dbReference type="FunFam" id="3.40.50.1370:FF:000008">
    <property type="entry name" value="Ornithine carbamoyltransferase"/>
    <property type="match status" value="1"/>
</dbReference>
<dbReference type="Gene3D" id="3.40.50.1370">
    <property type="entry name" value="Aspartate/ornithine carbamoyltransferase"/>
    <property type="match status" value="2"/>
</dbReference>
<dbReference type="HAMAP" id="MF_01109">
    <property type="entry name" value="OTCase"/>
    <property type="match status" value="1"/>
</dbReference>
<dbReference type="InterPro" id="IPR006132">
    <property type="entry name" value="Asp/Orn_carbamoyltranf_P-bd"/>
</dbReference>
<dbReference type="InterPro" id="IPR006130">
    <property type="entry name" value="Asp/Orn_carbamoylTrfase"/>
</dbReference>
<dbReference type="InterPro" id="IPR036901">
    <property type="entry name" value="Asp/Orn_carbamoylTrfase_sf"/>
</dbReference>
<dbReference type="InterPro" id="IPR006131">
    <property type="entry name" value="Asp_carbamoyltransf_Asp/Orn-bd"/>
</dbReference>
<dbReference type="InterPro" id="IPR002292">
    <property type="entry name" value="Orn/put_carbamltrans"/>
</dbReference>
<dbReference type="InterPro" id="IPR024904">
    <property type="entry name" value="OTCase_ArgI"/>
</dbReference>
<dbReference type="NCBIfam" id="TIGR00658">
    <property type="entry name" value="orni_carb_tr"/>
    <property type="match status" value="1"/>
</dbReference>
<dbReference type="NCBIfam" id="NF001986">
    <property type="entry name" value="PRK00779.1"/>
    <property type="match status" value="1"/>
</dbReference>
<dbReference type="PANTHER" id="PTHR45753:SF1">
    <property type="entry name" value="ORNITHINE CARBAMOYLTRANSFERASE, CATABOLIC"/>
    <property type="match status" value="1"/>
</dbReference>
<dbReference type="PANTHER" id="PTHR45753">
    <property type="entry name" value="ORNITHINE CARBAMOYLTRANSFERASE, MITOCHONDRIAL"/>
    <property type="match status" value="1"/>
</dbReference>
<dbReference type="Pfam" id="PF00185">
    <property type="entry name" value="OTCace"/>
    <property type="match status" value="1"/>
</dbReference>
<dbReference type="Pfam" id="PF02729">
    <property type="entry name" value="OTCace_N"/>
    <property type="match status" value="1"/>
</dbReference>
<dbReference type="PRINTS" id="PR00100">
    <property type="entry name" value="AOTCASE"/>
</dbReference>
<dbReference type="PRINTS" id="PR00102">
    <property type="entry name" value="OTCASE"/>
</dbReference>
<dbReference type="SUPFAM" id="SSF53671">
    <property type="entry name" value="Aspartate/ornithine carbamoyltransferase"/>
    <property type="match status" value="1"/>
</dbReference>
<dbReference type="PROSITE" id="PS00097">
    <property type="entry name" value="CARBAMOYLTRANSFERASE"/>
    <property type="match status" value="1"/>
</dbReference>
<organism>
    <name type="scientific">Staphylococcus aureus (strain MW2)</name>
    <dbReference type="NCBI Taxonomy" id="196620"/>
    <lineage>
        <taxon>Bacteria</taxon>
        <taxon>Bacillati</taxon>
        <taxon>Bacillota</taxon>
        <taxon>Bacilli</taxon>
        <taxon>Bacillales</taxon>
        <taxon>Staphylococcaceae</taxon>
        <taxon>Staphylococcus</taxon>
    </lineage>
</organism>
<name>OTCC_STAAW</name>
<gene>
    <name type="primary">arcB</name>
    <name type="ordered locus">MW2555</name>
</gene>
<proteinExistence type="inferred from homology"/>
<comment type="function">
    <text evidence="1">Reversibly catalyzes the transfer of the carbamoyl group from carbamoyl phosphate (CP) to the N(epsilon) atom of ornithine (ORN) to produce L-citrulline.</text>
</comment>
<comment type="catalytic activity">
    <reaction>
        <text>carbamoyl phosphate + L-ornithine = L-citrulline + phosphate + H(+)</text>
        <dbReference type="Rhea" id="RHEA:19513"/>
        <dbReference type="ChEBI" id="CHEBI:15378"/>
        <dbReference type="ChEBI" id="CHEBI:43474"/>
        <dbReference type="ChEBI" id="CHEBI:46911"/>
        <dbReference type="ChEBI" id="CHEBI:57743"/>
        <dbReference type="ChEBI" id="CHEBI:58228"/>
        <dbReference type="EC" id="2.1.3.3"/>
    </reaction>
</comment>
<comment type="pathway">
    <text>Amino-acid degradation; L-arginine degradation via ADI pathway; carbamoyl phosphate from L-arginine: step 2/2.</text>
</comment>
<comment type="subcellular location">
    <subcellularLocation>
        <location evidence="1">Cytoplasm</location>
    </subcellularLocation>
</comment>
<comment type="similarity">
    <text evidence="3">Belongs to the aspartate/ornithine carbamoyltransferase superfamily. OTCase family.</text>
</comment>